<reference key="1">
    <citation type="journal article" date="2004" name="Nat. Genet.">
        <title>Complete sequencing and characterization of 21,243 full-length human cDNAs.</title>
        <authorList>
            <person name="Ota T."/>
            <person name="Suzuki Y."/>
            <person name="Nishikawa T."/>
            <person name="Otsuki T."/>
            <person name="Sugiyama T."/>
            <person name="Irie R."/>
            <person name="Wakamatsu A."/>
            <person name="Hayashi K."/>
            <person name="Sato H."/>
            <person name="Nagai K."/>
            <person name="Kimura K."/>
            <person name="Makita H."/>
            <person name="Sekine M."/>
            <person name="Obayashi M."/>
            <person name="Nishi T."/>
            <person name="Shibahara T."/>
            <person name="Tanaka T."/>
            <person name="Ishii S."/>
            <person name="Yamamoto J."/>
            <person name="Saito K."/>
            <person name="Kawai Y."/>
            <person name="Isono Y."/>
            <person name="Nakamura Y."/>
            <person name="Nagahari K."/>
            <person name="Murakami K."/>
            <person name="Yasuda T."/>
            <person name="Iwayanagi T."/>
            <person name="Wagatsuma M."/>
            <person name="Shiratori A."/>
            <person name="Sudo H."/>
            <person name="Hosoiri T."/>
            <person name="Kaku Y."/>
            <person name="Kodaira H."/>
            <person name="Kondo H."/>
            <person name="Sugawara M."/>
            <person name="Takahashi M."/>
            <person name="Kanda K."/>
            <person name="Yokoi T."/>
            <person name="Furuya T."/>
            <person name="Kikkawa E."/>
            <person name="Omura Y."/>
            <person name="Abe K."/>
            <person name="Kamihara K."/>
            <person name="Katsuta N."/>
            <person name="Sato K."/>
            <person name="Tanikawa M."/>
            <person name="Yamazaki M."/>
            <person name="Ninomiya K."/>
            <person name="Ishibashi T."/>
            <person name="Yamashita H."/>
            <person name="Murakawa K."/>
            <person name="Fujimori K."/>
            <person name="Tanai H."/>
            <person name="Kimata M."/>
            <person name="Watanabe M."/>
            <person name="Hiraoka S."/>
            <person name="Chiba Y."/>
            <person name="Ishida S."/>
            <person name="Ono Y."/>
            <person name="Takiguchi S."/>
            <person name="Watanabe S."/>
            <person name="Yosida M."/>
            <person name="Hotuta T."/>
            <person name="Kusano J."/>
            <person name="Kanehori K."/>
            <person name="Takahashi-Fujii A."/>
            <person name="Hara H."/>
            <person name="Tanase T.-O."/>
            <person name="Nomura Y."/>
            <person name="Togiya S."/>
            <person name="Komai F."/>
            <person name="Hara R."/>
            <person name="Takeuchi K."/>
            <person name="Arita M."/>
            <person name="Imose N."/>
            <person name="Musashino K."/>
            <person name="Yuuki H."/>
            <person name="Oshima A."/>
            <person name="Sasaki N."/>
            <person name="Aotsuka S."/>
            <person name="Yoshikawa Y."/>
            <person name="Matsunawa H."/>
            <person name="Ichihara T."/>
            <person name="Shiohata N."/>
            <person name="Sano S."/>
            <person name="Moriya S."/>
            <person name="Momiyama H."/>
            <person name="Satoh N."/>
            <person name="Takami S."/>
            <person name="Terashima Y."/>
            <person name="Suzuki O."/>
            <person name="Nakagawa S."/>
            <person name="Senoh A."/>
            <person name="Mizoguchi H."/>
            <person name="Goto Y."/>
            <person name="Shimizu F."/>
            <person name="Wakebe H."/>
            <person name="Hishigaki H."/>
            <person name="Watanabe T."/>
            <person name="Sugiyama A."/>
            <person name="Takemoto M."/>
            <person name="Kawakami B."/>
            <person name="Yamazaki M."/>
            <person name="Watanabe K."/>
            <person name="Kumagai A."/>
            <person name="Itakura S."/>
            <person name="Fukuzumi Y."/>
            <person name="Fujimori Y."/>
            <person name="Komiyama M."/>
            <person name="Tashiro H."/>
            <person name="Tanigami A."/>
            <person name="Fujiwara T."/>
            <person name="Ono T."/>
            <person name="Yamada K."/>
            <person name="Fujii Y."/>
            <person name="Ozaki K."/>
            <person name="Hirao M."/>
            <person name="Ohmori Y."/>
            <person name="Kawabata A."/>
            <person name="Hikiji T."/>
            <person name="Kobatake N."/>
            <person name="Inagaki H."/>
            <person name="Ikema Y."/>
            <person name="Okamoto S."/>
            <person name="Okitani R."/>
            <person name="Kawakami T."/>
            <person name="Noguchi S."/>
            <person name="Itoh T."/>
            <person name="Shigeta K."/>
            <person name="Senba T."/>
            <person name="Matsumura K."/>
            <person name="Nakajima Y."/>
            <person name="Mizuno T."/>
            <person name="Morinaga M."/>
            <person name="Sasaki M."/>
            <person name="Togashi T."/>
            <person name="Oyama M."/>
            <person name="Hata H."/>
            <person name="Watanabe M."/>
            <person name="Komatsu T."/>
            <person name="Mizushima-Sugano J."/>
            <person name="Satoh T."/>
            <person name="Shirai Y."/>
            <person name="Takahashi Y."/>
            <person name="Nakagawa K."/>
            <person name="Okumura K."/>
            <person name="Nagase T."/>
            <person name="Nomura N."/>
            <person name="Kikuchi H."/>
            <person name="Masuho Y."/>
            <person name="Yamashita R."/>
            <person name="Nakai K."/>
            <person name="Yada T."/>
            <person name="Nakamura Y."/>
            <person name="Ohara O."/>
            <person name="Isogai T."/>
            <person name="Sugano S."/>
        </authorList>
    </citation>
    <scope>NUCLEOTIDE SEQUENCE [LARGE SCALE MRNA]</scope>
    <source>
        <tissue>Testis</tissue>
    </source>
</reference>
<reference key="2">
    <citation type="journal article" date="2005" name="Nature">
        <title>Generation and annotation of the DNA sequences of human chromosomes 2 and 4.</title>
        <authorList>
            <person name="Hillier L.W."/>
            <person name="Graves T.A."/>
            <person name="Fulton R.S."/>
            <person name="Fulton L.A."/>
            <person name="Pepin K.H."/>
            <person name="Minx P."/>
            <person name="Wagner-McPherson C."/>
            <person name="Layman D."/>
            <person name="Wylie K."/>
            <person name="Sekhon M."/>
            <person name="Becker M.C."/>
            <person name="Fewell G.A."/>
            <person name="Delehaunty K.D."/>
            <person name="Miner T.L."/>
            <person name="Nash W.E."/>
            <person name="Kremitzki C."/>
            <person name="Oddy L."/>
            <person name="Du H."/>
            <person name="Sun H."/>
            <person name="Bradshaw-Cordum H."/>
            <person name="Ali J."/>
            <person name="Carter J."/>
            <person name="Cordes M."/>
            <person name="Harris A."/>
            <person name="Isak A."/>
            <person name="van Brunt A."/>
            <person name="Nguyen C."/>
            <person name="Du F."/>
            <person name="Courtney L."/>
            <person name="Kalicki J."/>
            <person name="Ozersky P."/>
            <person name="Abbott S."/>
            <person name="Armstrong J."/>
            <person name="Belter E.A."/>
            <person name="Caruso L."/>
            <person name="Cedroni M."/>
            <person name="Cotton M."/>
            <person name="Davidson T."/>
            <person name="Desai A."/>
            <person name="Elliott G."/>
            <person name="Erb T."/>
            <person name="Fronick C."/>
            <person name="Gaige T."/>
            <person name="Haakenson W."/>
            <person name="Haglund K."/>
            <person name="Holmes A."/>
            <person name="Harkins R."/>
            <person name="Kim K."/>
            <person name="Kruchowski S.S."/>
            <person name="Strong C.M."/>
            <person name="Grewal N."/>
            <person name="Goyea E."/>
            <person name="Hou S."/>
            <person name="Levy A."/>
            <person name="Martinka S."/>
            <person name="Mead K."/>
            <person name="McLellan M.D."/>
            <person name="Meyer R."/>
            <person name="Randall-Maher J."/>
            <person name="Tomlinson C."/>
            <person name="Dauphin-Kohlberg S."/>
            <person name="Kozlowicz-Reilly A."/>
            <person name="Shah N."/>
            <person name="Swearengen-Shahid S."/>
            <person name="Snider J."/>
            <person name="Strong J.T."/>
            <person name="Thompson J."/>
            <person name="Yoakum M."/>
            <person name="Leonard S."/>
            <person name="Pearman C."/>
            <person name="Trani L."/>
            <person name="Radionenko M."/>
            <person name="Waligorski J.E."/>
            <person name="Wang C."/>
            <person name="Rock S.M."/>
            <person name="Tin-Wollam A.-M."/>
            <person name="Maupin R."/>
            <person name="Latreille P."/>
            <person name="Wendl M.C."/>
            <person name="Yang S.-P."/>
            <person name="Pohl C."/>
            <person name="Wallis J.W."/>
            <person name="Spieth J."/>
            <person name="Bieri T.A."/>
            <person name="Berkowicz N."/>
            <person name="Nelson J.O."/>
            <person name="Osborne J."/>
            <person name="Ding L."/>
            <person name="Meyer R."/>
            <person name="Sabo A."/>
            <person name="Shotland Y."/>
            <person name="Sinha P."/>
            <person name="Wohldmann P.E."/>
            <person name="Cook L.L."/>
            <person name="Hickenbotham M.T."/>
            <person name="Eldred J."/>
            <person name="Williams D."/>
            <person name="Jones T.A."/>
            <person name="She X."/>
            <person name="Ciccarelli F.D."/>
            <person name="Izaurralde E."/>
            <person name="Taylor J."/>
            <person name="Schmutz J."/>
            <person name="Myers R.M."/>
            <person name="Cox D.R."/>
            <person name="Huang X."/>
            <person name="McPherson J.D."/>
            <person name="Mardis E.R."/>
            <person name="Clifton S.W."/>
            <person name="Warren W.C."/>
            <person name="Chinwalla A.T."/>
            <person name="Eddy S.R."/>
            <person name="Marra M.A."/>
            <person name="Ovcharenko I."/>
            <person name="Furey T.S."/>
            <person name="Miller W."/>
            <person name="Eichler E.E."/>
            <person name="Bork P."/>
            <person name="Suyama M."/>
            <person name="Torrents D."/>
            <person name="Waterston R.H."/>
            <person name="Wilson R.K."/>
        </authorList>
    </citation>
    <scope>NUCLEOTIDE SEQUENCE [LARGE SCALE GENOMIC DNA]</scope>
</reference>
<reference key="3">
    <citation type="submission" date="2005-09" db="EMBL/GenBank/DDBJ databases">
        <authorList>
            <person name="Mural R.J."/>
            <person name="Istrail S."/>
            <person name="Sutton G.G."/>
            <person name="Florea L."/>
            <person name="Halpern A.L."/>
            <person name="Mobarry C.M."/>
            <person name="Lippert R."/>
            <person name="Walenz B."/>
            <person name="Shatkay H."/>
            <person name="Dew I."/>
            <person name="Miller J.R."/>
            <person name="Flanigan M.J."/>
            <person name="Edwards N.J."/>
            <person name="Bolanos R."/>
            <person name="Fasulo D."/>
            <person name="Halldorsson B.V."/>
            <person name="Hannenhalli S."/>
            <person name="Turner R."/>
            <person name="Yooseph S."/>
            <person name="Lu F."/>
            <person name="Nusskern D.R."/>
            <person name="Shue B.C."/>
            <person name="Zheng X.H."/>
            <person name="Zhong F."/>
            <person name="Delcher A.L."/>
            <person name="Huson D.H."/>
            <person name="Kravitz S.A."/>
            <person name="Mouchard L."/>
            <person name="Reinert K."/>
            <person name="Remington K.A."/>
            <person name="Clark A.G."/>
            <person name="Waterman M.S."/>
            <person name="Eichler E.E."/>
            <person name="Adams M.D."/>
            <person name="Hunkapiller M.W."/>
            <person name="Myers E.W."/>
            <person name="Venter J.C."/>
        </authorList>
    </citation>
    <scope>NUCLEOTIDE SEQUENCE [LARGE SCALE GENOMIC DNA]</scope>
</reference>
<reference key="4">
    <citation type="journal article" date="2004" name="Genome Res.">
        <title>The status, quality, and expansion of the NIH full-length cDNA project: the Mammalian Gene Collection (MGC).</title>
        <authorList>
            <consortium name="The MGC Project Team"/>
        </authorList>
    </citation>
    <scope>NUCLEOTIDE SEQUENCE [LARGE SCALE MRNA]</scope>
    <source>
        <tissue>Testis</tissue>
    </source>
</reference>
<reference key="5">
    <citation type="journal article" date="2022" name="BMC Biol.">
        <title>The testis-specific E3 ubiquitin ligase RNF133 is required for fecundity in mice.</title>
        <authorList>
            <person name="Nozawa K."/>
            <person name="Fujihara Y."/>
            <person name="Devlin D.J."/>
            <person name="Deras R.E."/>
            <person name="Kent K."/>
            <person name="Larina I.V."/>
            <person name="Umezu K."/>
            <person name="Yu Z."/>
            <person name="Sutton C.M."/>
            <person name="Ye Q."/>
            <person name="Dean L.K."/>
            <person name="Emori C."/>
            <person name="Ikawa M."/>
            <person name="Garcia T.X."/>
            <person name="Matzuk M.M."/>
        </authorList>
    </citation>
    <scope>TISSUE SPECIFICITY</scope>
</reference>
<reference key="6">
    <citation type="submission" date="2009-02" db="PDB data bank">
        <title>Solution structure of the ZZ domain of zinc finger SWIM domain containing protein 2.</title>
        <authorList>
            <consortium name="RIKEN structural genomics initiative (RSGI)"/>
        </authorList>
    </citation>
    <scope>STRUCTURE BY NMR OF 208-292</scope>
</reference>
<dbReference type="EC" id="2.3.2.27"/>
<dbReference type="EMBL" id="AK128006">
    <property type="protein sequence ID" value="BAG54618.1"/>
    <property type="molecule type" value="mRNA"/>
</dbReference>
<dbReference type="EMBL" id="AC018735">
    <property type="protein sequence ID" value="AAY14907.1"/>
    <property type="molecule type" value="Genomic_DNA"/>
</dbReference>
<dbReference type="EMBL" id="AC103914">
    <property type="protein sequence ID" value="AAX82016.1"/>
    <property type="molecule type" value="Genomic_DNA"/>
</dbReference>
<dbReference type="EMBL" id="CH471058">
    <property type="protein sequence ID" value="EAX10929.1"/>
    <property type="molecule type" value="Genomic_DNA"/>
</dbReference>
<dbReference type="EMBL" id="BC031094">
    <property type="protein sequence ID" value="AAH31094.1"/>
    <property type="molecule type" value="mRNA"/>
</dbReference>
<dbReference type="CCDS" id="CCDS33348.1"/>
<dbReference type="RefSeq" id="NP_872327.2">
    <property type="nucleotide sequence ID" value="NM_182521.3"/>
</dbReference>
<dbReference type="PDB" id="2DIP">
    <property type="method" value="NMR"/>
    <property type="chains" value="A=208-292"/>
</dbReference>
<dbReference type="PDBsum" id="2DIP"/>
<dbReference type="SMR" id="Q8NEG5"/>
<dbReference type="BioGRID" id="127342">
    <property type="interactions" value="13"/>
</dbReference>
<dbReference type="FunCoup" id="Q8NEG5">
    <property type="interactions" value="6"/>
</dbReference>
<dbReference type="IntAct" id="Q8NEG5">
    <property type="interactions" value="8"/>
</dbReference>
<dbReference type="STRING" id="9606.ENSP00000295131"/>
<dbReference type="GlyGen" id="Q8NEG5">
    <property type="glycosylation" value="1 site, 1 O-linked glycan (1 site)"/>
</dbReference>
<dbReference type="iPTMnet" id="Q8NEG5"/>
<dbReference type="PhosphoSitePlus" id="Q8NEG5"/>
<dbReference type="BioMuta" id="ZSWIM2"/>
<dbReference type="DMDM" id="313104068"/>
<dbReference type="jPOST" id="Q8NEG5"/>
<dbReference type="PaxDb" id="9606-ENSP00000295131"/>
<dbReference type="PeptideAtlas" id="Q8NEG5"/>
<dbReference type="ProteomicsDB" id="73164"/>
<dbReference type="Antibodypedia" id="34014">
    <property type="antibodies" value="100 antibodies from 17 providers"/>
</dbReference>
<dbReference type="DNASU" id="151112"/>
<dbReference type="Ensembl" id="ENST00000295131.3">
    <property type="protein sequence ID" value="ENSP00000295131.2"/>
    <property type="gene ID" value="ENSG00000163012.4"/>
</dbReference>
<dbReference type="GeneID" id="151112"/>
<dbReference type="KEGG" id="hsa:151112"/>
<dbReference type="MANE-Select" id="ENST00000295131.3">
    <property type="protein sequence ID" value="ENSP00000295131.2"/>
    <property type="RefSeq nucleotide sequence ID" value="NM_182521.3"/>
    <property type="RefSeq protein sequence ID" value="NP_872327.2"/>
</dbReference>
<dbReference type="UCSC" id="uc002upu.2">
    <property type="organism name" value="human"/>
</dbReference>
<dbReference type="AGR" id="HGNC:30990"/>
<dbReference type="CTD" id="151112"/>
<dbReference type="DisGeNET" id="151112"/>
<dbReference type="GeneCards" id="ZSWIM2"/>
<dbReference type="HGNC" id="HGNC:30990">
    <property type="gene designation" value="ZSWIM2"/>
</dbReference>
<dbReference type="HPA" id="ENSG00000163012">
    <property type="expression patterns" value="Tissue enriched (testis)"/>
</dbReference>
<dbReference type="neXtProt" id="NX_Q8NEG5"/>
<dbReference type="OpenTargets" id="ENSG00000163012"/>
<dbReference type="PharmGKB" id="PA134900131"/>
<dbReference type="VEuPathDB" id="HostDB:ENSG00000163012"/>
<dbReference type="eggNOG" id="KOG0800">
    <property type="taxonomic scope" value="Eukaryota"/>
</dbReference>
<dbReference type="GeneTree" id="ENSGT00390000006826"/>
<dbReference type="HOGENOM" id="CLU_029121_0_0_1"/>
<dbReference type="InParanoid" id="Q8NEG5"/>
<dbReference type="OMA" id="YNPLTWK"/>
<dbReference type="OrthoDB" id="8062037at2759"/>
<dbReference type="PAN-GO" id="Q8NEG5">
    <property type="GO annotations" value="0 GO annotations based on evolutionary models"/>
</dbReference>
<dbReference type="PhylomeDB" id="Q8NEG5"/>
<dbReference type="TreeFam" id="TF333237"/>
<dbReference type="PathwayCommons" id="Q8NEG5"/>
<dbReference type="SignaLink" id="Q8NEG5"/>
<dbReference type="SIGNOR" id="Q8NEG5"/>
<dbReference type="BioGRID-ORCS" id="151112">
    <property type="hits" value="12 hits in 1184 CRISPR screens"/>
</dbReference>
<dbReference type="EvolutionaryTrace" id="Q8NEG5"/>
<dbReference type="GenomeRNAi" id="151112"/>
<dbReference type="Pharos" id="Q8NEG5">
    <property type="development level" value="Tbio"/>
</dbReference>
<dbReference type="PRO" id="PR:Q8NEG5"/>
<dbReference type="Proteomes" id="UP000005640">
    <property type="component" value="Chromosome 2"/>
</dbReference>
<dbReference type="RNAct" id="Q8NEG5">
    <property type="molecule type" value="protein"/>
</dbReference>
<dbReference type="Bgee" id="ENSG00000163012">
    <property type="expression patterns" value="Expressed in male germ line stem cell (sensu Vertebrata) in testis and 54 other cell types or tissues"/>
</dbReference>
<dbReference type="ExpressionAtlas" id="Q8NEG5">
    <property type="expression patterns" value="baseline and differential"/>
</dbReference>
<dbReference type="GO" id="GO:0061630">
    <property type="term" value="F:ubiquitin protein ligase activity"/>
    <property type="evidence" value="ECO:0007669"/>
    <property type="project" value="Ensembl"/>
</dbReference>
<dbReference type="GO" id="GO:0008270">
    <property type="term" value="F:zinc ion binding"/>
    <property type="evidence" value="ECO:0007669"/>
    <property type="project" value="UniProtKB-KW"/>
</dbReference>
<dbReference type="GO" id="GO:0006915">
    <property type="term" value="P:apoptotic process"/>
    <property type="evidence" value="ECO:0007669"/>
    <property type="project" value="UniProtKB-KW"/>
</dbReference>
<dbReference type="GO" id="GO:1902043">
    <property type="term" value="P:positive regulation of extrinsic apoptotic signaling pathway via death domain receptors"/>
    <property type="evidence" value="ECO:0007669"/>
    <property type="project" value="Ensembl"/>
</dbReference>
<dbReference type="GO" id="GO:0000209">
    <property type="term" value="P:protein polyubiquitination"/>
    <property type="evidence" value="ECO:0007669"/>
    <property type="project" value="Ensembl"/>
</dbReference>
<dbReference type="CDD" id="cd16486">
    <property type="entry name" value="mRING-H2-C3H2C2D_ZSWM2"/>
    <property type="match status" value="1"/>
</dbReference>
<dbReference type="CDD" id="cd16494">
    <property type="entry name" value="RING-CH-C4HC3_ZSWM2"/>
    <property type="match status" value="1"/>
</dbReference>
<dbReference type="FunFam" id="3.30.40.10:FF:001047">
    <property type="entry name" value="Zinc finger, SWIM domain containing 2"/>
    <property type="match status" value="1"/>
</dbReference>
<dbReference type="Gene3D" id="3.30.60.90">
    <property type="match status" value="1"/>
</dbReference>
<dbReference type="Gene3D" id="3.30.40.10">
    <property type="entry name" value="Zinc/RING finger domain, C3HC4 (zinc finger)"/>
    <property type="match status" value="2"/>
</dbReference>
<dbReference type="InterPro" id="IPR001841">
    <property type="entry name" value="Znf_RING"/>
</dbReference>
<dbReference type="InterPro" id="IPR013083">
    <property type="entry name" value="Znf_RING/FYVE/PHD"/>
</dbReference>
<dbReference type="InterPro" id="IPR007527">
    <property type="entry name" value="Znf_SWIM"/>
</dbReference>
<dbReference type="InterPro" id="IPR000433">
    <property type="entry name" value="Znf_ZZ"/>
</dbReference>
<dbReference type="InterPro" id="IPR043145">
    <property type="entry name" value="Znf_ZZ_sf"/>
</dbReference>
<dbReference type="InterPro" id="IPR039903">
    <property type="entry name" value="Zswim2"/>
</dbReference>
<dbReference type="PANTHER" id="PTHR21540:SF3">
    <property type="entry name" value="E3 UBIQUITIN-PROTEIN LIGASE ZSWIM2"/>
    <property type="match status" value="1"/>
</dbReference>
<dbReference type="PANTHER" id="PTHR21540">
    <property type="entry name" value="RING FINGER AND SWIM DOMAIN-CONTAINING PROTEIN 2"/>
    <property type="match status" value="1"/>
</dbReference>
<dbReference type="Pfam" id="PF04434">
    <property type="entry name" value="SWIM"/>
    <property type="match status" value="1"/>
</dbReference>
<dbReference type="Pfam" id="PF13639">
    <property type="entry name" value="zf-RING_2"/>
    <property type="match status" value="1"/>
</dbReference>
<dbReference type="Pfam" id="PF00569">
    <property type="entry name" value="ZZ"/>
    <property type="match status" value="1"/>
</dbReference>
<dbReference type="SMART" id="SM00184">
    <property type="entry name" value="RING"/>
    <property type="match status" value="2"/>
</dbReference>
<dbReference type="SUPFAM" id="SSF57850">
    <property type="entry name" value="RING/U-box"/>
    <property type="match status" value="3"/>
</dbReference>
<dbReference type="PROSITE" id="PS50089">
    <property type="entry name" value="ZF_RING_2"/>
    <property type="match status" value="2"/>
</dbReference>
<dbReference type="PROSITE" id="PS50966">
    <property type="entry name" value="ZF_SWIM"/>
    <property type="match status" value="1"/>
</dbReference>
<dbReference type="PROSITE" id="PS01357">
    <property type="entry name" value="ZF_ZZ_1"/>
    <property type="match status" value="1"/>
</dbReference>
<dbReference type="PROSITE" id="PS50135">
    <property type="entry name" value="ZF_ZZ_2"/>
    <property type="match status" value="1"/>
</dbReference>
<sequence>MLRRGYKASERRRHLSERLSWHQDQALSSSIYLLREMGPTGFLLREEEPEYMDFRVFLGNPHVCNCSTFPKGGELCKHICWVLLKKFKLPRNHESALQLGLGEREISDLLRGIHRVQTPQPGTNDENEHVEEDGYIKQKEIDSEDICSICQELLLEKKLPVTFCRFGCGNSIHIKCMKILANYQSTSNTSMLKCPLCRKEFAPLKLILEEFKNSSKLVAAAEKERLDKHLGIPCNNCKQFPIEGKCYKCTECIEYHLCQECFDSCCHLSHTFTFREKRNQKWRSLEKRADEVVKYIDTKNEIEEKMSHFQEKQGQVYTPKHIVRSLPLQLITKNSKLLAPGYQCLLCLKAFHLGQHTRLLPCTHKFHRKCIDNWLFHKCNSCPIDGQVIYNPLTWKNSAVNGQAHQSVSNRDIIHLSKQKEPDLFIPGTGLVLKQNRLGILPSIPQCNFDELNTPQSPKDAYENTTIDNLCSIKLDNSNSKKLTYDYKISQHFPRYLQDLPTVSFGKIPSQTLLPPIVHKNIVCPTAMESPCISGKFHTSLSRMTKGCKCNNHNLKKTPATKIREDNKRSTLLPEDFNLIVNWSTAKLSLSKRYSNCMGEITRKCSHLSRQPVSHSVNTKSTELSLIIEGVQL</sequence>
<evidence type="ECO:0000250" key="1">
    <source>
        <dbReference type="UniProtKB" id="Q9D9X6"/>
    </source>
</evidence>
<evidence type="ECO:0000255" key="2">
    <source>
        <dbReference type="PROSITE-ProRule" id="PRU00175"/>
    </source>
</evidence>
<evidence type="ECO:0000255" key="3">
    <source>
        <dbReference type="PROSITE-ProRule" id="PRU00228"/>
    </source>
</evidence>
<evidence type="ECO:0000255" key="4">
    <source>
        <dbReference type="PROSITE-ProRule" id="PRU00325"/>
    </source>
</evidence>
<evidence type="ECO:0000269" key="5">
    <source>
    </source>
</evidence>
<evidence type="ECO:0000305" key="6"/>
<evidence type="ECO:0000312" key="7">
    <source>
        <dbReference type="HGNC" id="HGNC:30990"/>
    </source>
</evidence>
<evidence type="ECO:0007829" key="8">
    <source>
        <dbReference type="PDB" id="2DIP"/>
    </source>
</evidence>
<keyword id="KW-0002">3D-structure</keyword>
<keyword id="KW-0053">Apoptosis</keyword>
<keyword id="KW-0479">Metal-binding</keyword>
<keyword id="KW-1185">Reference proteome</keyword>
<keyword id="KW-0677">Repeat</keyword>
<keyword id="KW-0808">Transferase</keyword>
<keyword id="KW-0832">Ubl conjugation</keyword>
<keyword id="KW-0833">Ubl conjugation pathway</keyword>
<keyword id="KW-0862">Zinc</keyword>
<keyword id="KW-0863">Zinc-finger</keyword>
<name>ZSWM2_HUMAN</name>
<protein>
    <recommendedName>
        <fullName>E3 ubiquitin-protein ligase ZSWIM2</fullName>
        <ecNumber>2.3.2.27</ecNumber>
    </recommendedName>
    <alternativeName>
        <fullName>MEKK1-related protein X</fullName>
        <shortName>MEX</shortName>
    </alternativeName>
    <alternativeName>
        <fullName>RING-type E3 ubiquitin transferase ZSWIM2</fullName>
    </alternativeName>
    <alternativeName>
        <fullName>ZZ-type zinc finger-containing protein 2</fullName>
    </alternativeName>
    <alternativeName>
        <fullName>Zinc finger SWIM domain-containing protein 2</fullName>
    </alternativeName>
</protein>
<accession>Q8NEG5</accession>
<accession>B3KXV6</accession>
<accession>Q53SI3</accession>
<accession>Q57ZY3</accession>
<organism>
    <name type="scientific">Homo sapiens</name>
    <name type="common">Human</name>
    <dbReference type="NCBI Taxonomy" id="9606"/>
    <lineage>
        <taxon>Eukaryota</taxon>
        <taxon>Metazoa</taxon>
        <taxon>Chordata</taxon>
        <taxon>Craniata</taxon>
        <taxon>Vertebrata</taxon>
        <taxon>Euteleostomi</taxon>
        <taxon>Mammalia</taxon>
        <taxon>Eutheria</taxon>
        <taxon>Euarchontoglires</taxon>
        <taxon>Primates</taxon>
        <taxon>Haplorrhini</taxon>
        <taxon>Catarrhini</taxon>
        <taxon>Hominidae</taxon>
        <taxon>Homo</taxon>
    </lineage>
</organism>
<comment type="function">
    <text evidence="1">E3 ubiquitin-protein ligase involved in the regulation of Fas-, DR3- and DR4-mediated apoptosis. Functions in conjunction with the UBE2D1, UBE2D3 and UBE2E1 E2 ubiquitin-conjugating enzymes.</text>
</comment>
<comment type="catalytic activity">
    <reaction evidence="1">
        <text>S-ubiquitinyl-[E2 ubiquitin-conjugating enzyme]-L-cysteine + [acceptor protein]-L-lysine = [E2 ubiquitin-conjugating enzyme]-L-cysteine + N(6)-ubiquitinyl-[acceptor protein]-L-lysine.</text>
        <dbReference type="EC" id="2.3.2.27"/>
    </reaction>
</comment>
<comment type="subunit">
    <text evidence="1">Dimer. Interacts with UBE2D1.</text>
</comment>
<comment type="tissue specificity">
    <text evidence="5">Expression is testis-specific.</text>
</comment>
<comment type="domain">
    <text evidence="1">The SWIM-type zinc finger is required for ubiquitination activity.</text>
</comment>
<comment type="PTM">
    <text evidence="1">Polyubiquitinated. Polyubiquitination is followed by degradation via the proteasome.</text>
</comment>
<gene>
    <name evidence="7" type="primary">ZSWIM2</name>
    <name type="synonym">ZZZ2</name>
</gene>
<feature type="chain" id="PRO_0000223097" description="E3 ubiquitin-protein ligase ZSWIM2">
    <location>
        <begin position="1"/>
        <end position="633"/>
    </location>
</feature>
<feature type="zinc finger region" description="SWIM-type" evidence="4">
    <location>
        <begin position="54"/>
        <end position="87"/>
    </location>
</feature>
<feature type="zinc finger region" description="RING-type 1" evidence="2">
    <location>
        <begin position="147"/>
        <end position="198"/>
    </location>
</feature>
<feature type="zinc finger region" description="ZZ-type" evidence="3">
    <location>
        <begin position="229"/>
        <end position="280"/>
    </location>
</feature>
<feature type="zinc finger region" description="RING-type 2" evidence="2">
    <location>
        <begin position="344"/>
        <end position="388"/>
    </location>
</feature>
<feature type="binding site" evidence="3">
    <location>
        <position position="234"/>
    </location>
    <ligand>
        <name>Zn(2+)</name>
        <dbReference type="ChEBI" id="CHEBI:29105"/>
        <label>1</label>
    </ligand>
</feature>
<feature type="binding site" evidence="3">
    <location>
        <position position="237"/>
    </location>
    <ligand>
        <name>Zn(2+)</name>
        <dbReference type="ChEBI" id="CHEBI:29105"/>
        <label>1</label>
    </ligand>
</feature>
<feature type="binding site" evidence="3">
    <location>
        <position position="249"/>
    </location>
    <ligand>
        <name>Zn(2+)</name>
        <dbReference type="ChEBI" id="CHEBI:29105"/>
        <label>2</label>
    </ligand>
</feature>
<feature type="binding site" evidence="3">
    <location>
        <position position="252"/>
    </location>
    <ligand>
        <name>Zn(2+)</name>
        <dbReference type="ChEBI" id="CHEBI:29105"/>
        <label>2</label>
    </ligand>
</feature>
<feature type="binding site" evidence="3">
    <location>
        <position position="258"/>
    </location>
    <ligand>
        <name>Zn(2+)</name>
        <dbReference type="ChEBI" id="CHEBI:29105"/>
        <label>1</label>
    </ligand>
</feature>
<feature type="binding site" evidence="3">
    <location>
        <position position="261"/>
    </location>
    <ligand>
        <name>Zn(2+)</name>
        <dbReference type="ChEBI" id="CHEBI:29105"/>
        <label>1</label>
    </ligand>
</feature>
<feature type="binding site" evidence="3">
    <location>
        <position position="267"/>
    </location>
    <ligand>
        <name>Zn(2+)</name>
        <dbReference type="ChEBI" id="CHEBI:29105"/>
        <label>2</label>
    </ligand>
</feature>
<feature type="binding site" evidence="3">
    <location>
        <position position="270"/>
    </location>
    <ligand>
        <name>Zn(2+)</name>
        <dbReference type="ChEBI" id="CHEBI:29105"/>
        <label>2</label>
    </ligand>
</feature>
<feature type="sequence conflict" description="In Ref. 4; AAH31094." evidence="6" ref="4">
    <original>K</original>
    <variation>E</variation>
    <location>
        <position position="88"/>
    </location>
</feature>
<feature type="sequence conflict" description="In Ref. 4; AAH31094." evidence="6" ref="4">
    <original>C</original>
    <variation>Y</variation>
    <location>
        <position position="265"/>
    </location>
</feature>
<feature type="sequence conflict" description="In Ref. 4; AAH31094." evidence="6" ref="4">
    <original>I</original>
    <variation>T</variation>
    <location>
        <position position="302"/>
    </location>
</feature>
<feature type="sequence conflict" description="In Ref. 4; AAH31094." evidence="6" ref="4">
    <original>D</original>
    <variation>G</variation>
    <location>
        <position position="385"/>
    </location>
</feature>
<feature type="sequence conflict" description="In Ref. 4; AAH31094." evidence="6" ref="4">
    <original>D</original>
    <variation>E</variation>
    <location>
        <position position="486"/>
    </location>
</feature>
<feature type="sequence conflict" description="In Ref. 4; AAH31094." evidence="6" ref="4">
    <original>F</original>
    <variation>Y</variation>
    <location>
        <position position="537"/>
    </location>
</feature>
<feature type="sequence conflict" description="In Ref. 4; AAH31094." evidence="6" ref="4">
    <original>M</original>
    <variation>V</variation>
    <location>
        <position position="544"/>
    </location>
</feature>
<feature type="strand" evidence="8">
    <location>
        <begin position="235"/>
        <end position="237"/>
    </location>
</feature>
<feature type="strand" evidence="8">
    <location>
        <begin position="246"/>
        <end position="254"/>
    </location>
</feature>
<feature type="strand" evidence="8">
    <location>
        <begin position="256"/>
        <end position="258"/>
    </location>
</feature>
<feature type="helix" evidence="8">
    <location>
        <begin position="259"/>
        <end position="263"/>
    </location>
</feature>
<feature type="helix" evidence="8">
    <location>
        <begin position="267"/>
        <end position="269"/>
    </location>
</feature>
<feature type="strand" evidence="8">
    <location>
        <begin position="272"/>
        <end position="274"/>
    </location>
</feature>
<feature type="strand" evidence="8">
    <location>
        <begin position="277"/>
        <end position="279"/>
    </location>
</feature>
<proteinExistence type="evidence at protein level"/>